<accession>B1MX52</accession>
<proteinExistence type="inferred from homology"/>
<dbReference type="EMBL" id="DQ489736">
    <property type="protein sequence ID" value="ACA82104.1"/>
    <property type="molecule type" value="Genomic_DNA"/>
</dbReference>
<dbReference type="RefSeq" id="WP_004901238.1">
    <property type="nucleotide sequence ID" value="NC_010471.1"/>
</dbReference>
<dbReference type="SMR" id="B1MX52"/>
<dbReference type="STRING" id="349519.LCK_00271"/>
<dbReference type="GeneID" id="61102803"/>
<dbReference type="KEGG" id="lci:LCK_00271"/>
<dbReference type="eggNOG" id="COG0782">
    <property type="taxonomic scope" value="Bacteria"/>
</dbReference>
<dbReference type="HOGENOM" id="CLU_101379_2_1_9"/>
<dbReference type="OrthoDB" id="9808774at2"/>
<dbReference type="Proteomes" id="UP000002166">
    <property type="component" value="Chromosome"/>
</dbReference>
<dbReference type="GO" id="GO:0003677">
    <property type="term" value="F:DNA binding"/>
    <property type="evidence" value="ECO:0007669"/>
    <property type="project" value="UniProtKB-UniRule"/>
</dbReference>
<dbReference type="GO" id="GO:0070063">
    <property type="term" value="F:RNA polymerase binding"/>
    <property type="evidence" value="ECO:0007669"/>
    <property type="project" value="InterPro"/>
</dbReference>
<dbReference type="GO" id="GO:0006354">
    <property type="term" value="P:DNA-templated transcription elongation"/>
    <property type="evidence" value="ECO:0007669"/>
    <property type="project" value="TreeGrafter"/>
</dbReference>
<dbReference type="GO" id="GO:0032784">
    <property type="term" value="P:regulation of DNA-templated transcription elongation"/>
    <property type="evidence" value="ECO:0007669"/>
    <property type="project" value="UniProtKB-UniRule"/>
</dbReference>
<dbReference type="FunFam" id="1.10.287.180:FF:000001">
    <property type="entry name" value="Transcription elongation factor GreA"/>
    <property type="match status" value="1"/>
</dbReference>
<dbReference type="FunFam" id="3.10.50.30:FF:000001">
    <property type="entry name" value="Transcription elongation factor GreA"/>
    <property type="match status" value="1"/>
</dbReference>
<dbReference type="Gene3D" id="3.10.50.30">
    <property type="entry name" value="Transcription elongation factor, GreA/GreB, C-terminal domain"/>
    <property type="match status" value="1"/>
</dbReference>
<dbReference type="Gene3D" id="1.10.287.180">
    <property type="entry name" value="Transcription elongation factor, GreA/GreB, N-terminal domain"/>
    <property type="match status" value="1"/>
</dbReference>
<dbReference type="HAMAP" id="MF_00105">
    <property type="entry name" value="GreA_GreB"/>
    <property type="match status" value="1"/>
</dbReference>
<dbReference type="InterPro" id="IPR036953">
    <property type="entry name" value="GreA/GreB_C_sf"/>
</dbReference>
<dbReference type="InterPro" id="IPR018151">
    <property type="entry name" value="TF_GreA/GreB_CS"/>
</dbReference>
<dbReference type="InterPro" id="IPR006359">
    <property type="entry name" value="Tscrpt_elong_fac_GreA"/>
</dbReference>
<dbReference type="InterPro" id="IPR028624">
    <property type="entry name" value="Tscrpt_elong_fac_GreA/B"/>
</dbReference>
<dbReference type="InterPro" id="IPR001437">
    <property type="entry name" value="Tscrpt_elong_fac_GreA/B_C"/>
</dbReference>
<dbReference type="InterPro" id="IPR023459">
    <property type="entry name" value="Tscrpt_elong_fac_GreA/B_fam"/>
</dbReference>
<dbReference type="InterPro" id="IPR022691">
    <property type="entry name" value="Tscrpt_elong_fac_GreA/B_N"/>
</dbReference>
<dbReference type="InterPro" id="IPR036805">
    <property type="entry name" value="Tscrpt_elong_fac_GreA/B_N_sf"/>
</dbReference>
<dbReference type="NCBIfam" id="TIGR01462">
    <property type="entry name" value="greA"/>
    <property type="match status" value="1"/>
</dbReference>
<dbReference type="NCBIfam" id="NF001263">
    <property type="entry name" value="PRK00226.1-4"/>
    <property type="match status" value="1"/>
</dbReference>
<dbReference type="PANTHER" id="PTHR30437">
    <property type="entry name" value="TRANSCRIPTION ELONGATION FACTOR GREA"/>
    <property type="match status" value="1"/>
</dbReference>
<dbReference type="PANTHER" id="PTHR30437:SF4">
    <property type="entry name" value="TRANSCRIPTION ELONGATION FACTOR GREA"/>
    <property type="match status" value="1"/>
</dbReference>
<dbReference type="Pfam" id="PF01272">
    <property type="entry name" value="GreA_GreB"/>
    <property type="match status" value="1"/>
</dbReference>
<dbReference type="Pfam" id="PF03449">
    <property type="entry name" value="GreA_GreB_N"/>
    <property type="match status" value="1"/>
</dbReference>
<dbReference type="PIRSF" id="PIRSF006092">
    <property type="entry name" value="GreA_GreB"/>
    <property type="match status" value="1"/>
</dbReference>
<dbReference type="SUPFAM" id="SSF54534">
    <property type="entry name" value="FKBP-like"/>
    <property type="match status" value="1"/>
</dbReference>
<dbReference type="SUPFAM" id="SSF46557">
    <property type="entry name" value="GreA transcript cleavage protein, N-terminal domain"/>
    <property type="match status" value="1"/>
</dbReference>
<dbReference type="PROSITE" id="PS00829">
    <property type="entry name" value="GREAB_1"/>
    <property type="match status" value="1"/>
</dbReference>
<sequence length="160" mass="17555">MSEEKVFPMTAEGRDKLQAELEDLITRQRPEITNRIQIARSYGDLSENSEYQSAKDEQAFVEGRILTLKKMIENAEIIDPNATAADVVSLGKTVTFKELPDEEPETYAIVGSTESDPLAGKISNESAMAVALLDKKVGDKVSVPLPSGESIDVEILKVEK</sequence>
<protein>
    <recommendedName>
        <fullName evidence="1">Transcription elongation factor GreA</fullName>
    </recommendedName>
    <alternativeName>
        <fullName evidence="1">Transcript cleavage factor GreA</fullName>
    </alternativeName>
</protein>
<feature type="chain" id="PRO_1000094175" description="Transcription elongation factor GreA">
    <location>
        <begin position="1"/>
        <end position="160"/>
    </location>
</feature>
<reference key="1">
    <citation type="journal article" date="2008" name="J. Bacteriol.">
        <title>Complete genome sequence of Leuconostoc citreum KM20.</title>
        <authorList>
            <person name="Kim J.F."/>
            <person name="Jeong H."/>
            <person name="Lee J.-S."/>
            <person name="Choi S.-H."/>
            <person name="Ha M."/>
            <person name="Hur C.-G."/>
            <person name="Kim J.-S."/>
            <person name="Lee S."/>
            <person name="Park H.-S."/>
            <person name="Park Y.-H."/>
            <person name="Oh T.K."/>
        </authorList>
    </citation>
    <scope>NUCLEOTIDE SEQUENCE [LARGE SCALE GENOMIC DNA]</scope>
    <source>
        <strain>KM20</strain>
    </source>
</reference>
<gene>
    <name evidence="1" type="primary">greA</name>
    <name type="ordered locus">LCK_00271</name>
</gene>
<evidence type="ECO:0000255" key="1">
    <source>
        <dbReference type="HAMAP-Rule" id="MF_00105"/>
    </source>
</evidence>
<name>GREA_LEUCK</name>
<keyword id="KW-0238">DNA-binding</keyword>
<keyword id="KW-1185">Reference proteome</keyword>
<keyword id="KW-0804">Transcription</keyword>
<keyword id="KW-0805">Transcription regulation</keyword>
<organism>
    <name type="scientific">Leuconostoc citreum (strain KM20)</name>
    <dbReference type="NCBI Taxonomy" id="349519"/>
    <lineage>
        <taxon>Bacteria</taxon>
        <taxon>Bacillati</taxon>
        <taxon>Bacillota</taxon>
        <taxon>Bacilli</taxon>
        <taxon>Lactobacillales</taxon>
        <taxon>Lactobacillaceae</taxon>
        <taxon>Leuconostoc</taxon>
    </lineage>
</organism>
<comment type="function">
    <text evidence="1">Necessary for efficient RNA polymerase transcription elongation past template-encoded arresting sites. The arresting sites in DNA have the property of trapping a certain fraction of elongating RNA polymerases that pass through, resulting in locked ternary complexes. Cleavage of the nascent transcript by cleavage factors such as GreA or GreB allows the resumption of elongation from the new 3'terminus. GreA releases sequences of 2 to 3 nucleotides.</text>
</comment>
<comment type="similarity">
    <text evidence="1">Belongs to the GreA/GreB family.</text>
</comment>